<keyword id="KW-0150">Chloroplast</keyword>
<keyword id="KW-0903">Direct protein sequencing</keyword>
<keyword id="KW-0934">Plastid</keyword>
<keyword id="KW-1185">Reference proteome</keyword>
<keyword id="KW-0793">Thylakoid</keyword>
<organism>
    <name type="scientific">Spinacia oleracea</name>
    <name type="common">Spinach</name>
    <dbReference type="NCBI Taxonomy" id="3562"/>
    <lineage>
        <taxon>Eukaryota</taxon>
        <taxon>Viridiplantae</taxon>
        <taxon>Streptophyta</taxon>
        <taxon>Embryophyta</taxon>
        <taxon>Tracheophyta</taxon>
        <taxon>Spermatophyta</taxon>
        <taxon>Magnoliopsida</taxon>
        <taxon>eudicotyledons</taxon>
        <taxon>Gunneridae</taxon>
        <taxon>Pentapetalae</taxon>
        <taxon>Caryophyllales</taxon>
        <taxon>Chenopodiaceae</taxon>
        <taxon>Chenopodioideae</taxon>
        <taxon>Anserineae</taxon>
        <taxon>Spinacia</taxon>
    </lineage>
</organism>
<accession>P82682</accession>
<evidence type="ECO:0000256" key="1">
    <source>
        <dbReference type="SAM" id="MobiDB-lite"/>
    </source>
</evidence>
<name>TL14_SPIOL</name>
<dbReference type="Proteomes" id="UP001155700">
    <property type="component" value="Unplaced"/>
</dbReference>
<dbReference type="GO" id="GO:0009543">
    <property type="term" value="C:chloroplast thylakoid lumen"/>
    <property type="evidence" value="ECO:0007669"/>
    <property type="project" value="UniProtKB-SubCell"/>
</dbReference>
<feature type="chain" id="PRO_0000072555" description="Thylakoid lumenal 14.7 kDa protein">
    <location>
        <begin position="1"/>
        <end position="20" status="greater than"/>
    </location>
</feature>
<feature type="region of interest" description="Disordered" evidence="1">
    <location>
        <begin position="1"/>
        <end position="20"/>
    </location>
</feature>
<feature type="compositionally biased region" description="Basic and acidic residues" evidence="1">
    <location>
        <begin position="9"/>
        <end position="20"/>
    </location>
</feature>
<feature type="non-terminal residue">
    <location>
        <position position="20"/>
    </location>
</feature>
<reference key="1">
    <citation type="submission" date="2000-07" db="UniProtKB">
        <authorList>
            <person name="Kieselbach T."/>
            <person name="Pettersson U."/>
            <person name="Bystedt M."/>
            <person name="Schroeder W.P."/>
        </authorList>
    </citation>
    <scope>PROTEIN SEQUENCE</scope>
</reference>
<protein>
    <recommendedName>
        <fullName>Thylakoid lumenal 14.7 kDa protein</fullName>
    </recommendedName>
    <alternativeName>
        <fullName>P14.7</fullName>
    </alternativeName>
</protein>
<sequence>KTGVNKPELLPKEETTVIDV</sequence>
<proteinExistence type="evidence at protein level"/>
<comment type="subcellular location">
    <subcellularLocation>
        <location>Plastid</location>
        <location>Chloroplast thylakoid lumen</location>
    </subcellularLocation>
</comment>